<gene>
    <name type="primary">ylbG</name>
    <name type="ordered locus">BSU15000</name>
</gene>
<dbReference type="EMBL" id="Z98682">
    <property type="protein sequence ID" value="CAB11353.1"/>
    <property type="molecule type" value="Genomic_DNA"/>
</dbReference>
<dbReference type="EMBL" id="AL009126">
    <property type="protein sequence ID" value="CAB13373.1"/>
    <property type="molecule type" value="Genomic_DNA"/>
</dbReference>
<dbReference type="PIR" id="D69874">
    <property type="entry name" value="D69874"/>
</dbReference>
<dbReference type="RefSeq" id="NP_389383.1">
    <property type="nucleotide sequence ID" value="NC_000964.3"/>
</dbReference>
<dbReference type="RefSeq" id="WP_009967171.1">
    <property type="nucleotide sequence ID" value="NZ_OZ025638.1"/>
</dbReference>
<dbReference type="SMR" id="O34658"/>
<dbReference type="FunCoup" id="O34658">
    <property type="interactions" value="32"/>
</dbReference>
<dbReference type="STRING" id="224308.BSU15000"/>
<dbReference type="PaxDb" id="224308-BSU15000"/>
<dbReference type="EnsemblBacteria" id="CAB13373">
    <property type="protein sequence ID" value="CAB13373"/>
    <property type="gene ID" value="BSU_15000"/>
</dbReference>
<dbReference type="GeneID" id="939846"/>
<dbReference type="KEGG" id="bsu:BSU15000"/>
<dbReference type="PATRIC" id="fig|224308.179.peg.1635"/>
<dbReference type="eggNOG" id="COG4471">
    <property type="taxonomic scope" value="Bacteria"/>
</dbReference>
<dbReference type="InParanoid" id="O34658"/>
<dbReference type="OrthoDB" id="2990788at2"/>
<dbReference type="PhylomeDB" id="O34658"/>
<dbReference type="BioCyc" id="BSUB:BSU15000-MONOMER"/>
<dbReference type="Proteomes" id="UP000001570">
    <property type="component" value="Chromosome"/>
</dbReference>
<dbReference type="GO" id="GO:0005737">
    <property type="term" value="C:cytoplasm"/>
    <property type="evidence" value="ECO:0007669"/>
    <property type="project" value="UniProtKB-SubCell"/>
</dbReference>
<dbReference type="HAMAP" id="MF_01126">
    <property type="entry name" value="UPF0298"/>
    <property type="match status" value="1"/>
</dbReference>
<dbReference type="InterPro" id="IPR016979">
    <property type="entry name" value="DUF2129"/>
</dbReference>
<dbReference type="NCBIfam" id="NF002777">
    <property type="entry name" value="PRK02886.1"/>
    <property type="match status" value="1"/>
</dbReference>
<dbReference type="Pfam" id="PF09902">
    <property type="entry name" value="DUF2129"/>
    <property type="match status" value="1"/>
</dbReference>
<dbReference type="PIRSF" id="PIRSF031653">
    <property type="entry name" value="UCP031653"/>
    <property type="match status" value="1"/>
</dbReference>
<keyword id="KW-0963">Cytoplasm</keyword>
<keyword id="KW-1185">Reference proteome</keyword>
<organism>
    <name type="scientific">Bacillus subtilis (strain 168)</name>
    <dbReference type="NCBI Taxonomy" id="224308"/>
    <lineage>
        <taxon>Bacteria</taxon>
        <taxon>Bacillati</taxon>
        <taxon>Bacillota</taxon>
        <taxon>Bacilli</taxon>
        <taxon>Bacillales</taxon>
        <taxon>Bacillaceae</taxon>
        <taxon>Bacillus</taxon>
    </lineage>
</organism>
<name>YLBG_BACSU</name>
<feature type="chain" id="PRO_0000074655" description="UPF0298 protein YlbG">
    <location>
        <begin position="1"/>
        <end position="90"/>
    </location>
</feature>
<proteinExistence type="inferred from homology"/>
<evidence type="ECO:0000305" key="1"/>
<sequence>MENRRQGMVVYLHSLKQSKMLRKFGNVHYVSKRLKYVVLYCDMDQIEKTMDKIASYSFVKKVEPSYKPFLKLEFESKLDKAKEYDYKIGI</sequence>
<reference key="1">
    <citation type="submission" date="1997-08" db="EMBL/GenBank/DDBJ databases">
        <title>Bacillus subtilis chromosomal region downstream nprE.</title>
        <authorList>
            <person name="Bertero M."/>
            <person name="Presecan E."/>
            <person name="Glaser P."/>
            <person name="Richou A."/>
            <person name="Danchin A."/>
        </authorList>
    </citation>
    <scope>NUCLEOTIDE SEQUENCE [GENOMIC DNA]</scope>
    <source>
        <strain>168</strain>
    </source>
</reference>
<reference key="2">
    <citation type="journal article" date="1997" name="Nature">
        <title>The complete genome sequence of the Gram-positive bacterium Bacillus subtilis.</title>
        <authorList>
            <person name="Kunst F."/>
            <person name="Ogasawara N."/>
            <person name="Moszer I."/>
            <person name="Albertini A.M."/>
            <person name="Alloni G."/>
            <person name="Azevedo V."/>
            <person name="Bertero M.G."/>
            <person name="Bessieres P."/>
            <person name="Bolotin A."/>
            <person name="Borchert S."/>
            <person name="Borriss R."/>
            <person name="Boursier L."/>
            <person name="Brans A."/>
            <person name="Braun M."/>
            <person name="Brignell S.C."/>
            <person name="Bron S."/>
            <person name="Brouillet S."/>
            <person name="Bruschi C.V."/>
            <person name="Caldwell B."/>
            <person name="Capuano V."/>
            <person name="Carter N.M."/>
            <person name="Choi S.-K."/>
            <person name="Codani J.-J."/>
            <person name="Connerton I.F."/>
            <person name="Cummings N.J."/>
            <person name="Daniel R.A."/>
            <person name="Denizot F."/>
            <person name="Devine K.M."/>
            <person name="Duesterhoeft A."/>
            <person name="Ehrlich S.D."/>
            <person name="Emmerson P.T."/>
            <person name="Entian K.-D."/>
            <person name="Errington J."/>
            <person name="Fabret C."/>
            <person name="Ferrari E."/>
            <person name="Foulger D."/>
            <person name="Fritz C."/>
            <person name="Fujita M."/>
            <person name="Fujita Y."/>
            <person name="Fuma S."/>
            <person name="Galizzi A."/>
            <person name="Galleron N."/>
            <person name="Ghim S.-Y."/>
            <person name="Glaser P."/>
            <person name="Goffeau A."/>
            <person name="Golightly E.J."/>
            <person name="Grandi G."/>
            <person name="Guiseppi G."/>
            <person name="Guy B.J."/>
            <person name="Haga K."/>
            <person name="Haiech J."/>
            <person name="Harwood C.R."/>
            <person name="Henaut A."/>
            <person name="Hilbert H."/>
            <person name="Holsappel S."/>
            <person name="Hosono S."/>
            <person name="Hullo M.-F."/>
            <person name="Itaya M."/>
            <person name="Jones L.-M."/>
            <person name="Joris B."/>
            <person name="Karamata D."/>
            <person name="Kasahara Y."/>
            <person name="Klaerr-Blanchard M."/>
            <person name="Klein C."/>
            <person name="Kobayashi Y."/>
            <person name="Koetter P."/>
            <person name="Koningstein G."/>
            <person name="Krogh S."/>
            <person name="Kumano M."/>
            <person name="Kurita K."/>
            <person name="Lapidus A."/>
            <person name="Lardinois S."/>
            <person name="Lauber J."/>
            <person name="Lazarevic V."/>
            <person name="Lee S.-M."/>
            <person name="Levine A."/>
            <person name="Liu H."/>
            <person name="Masuda S."/>
            <person name="Mauel C."/>
            <person name="Medigue C."/>
            <person name="Medina N."/>
            <person name="Mellado R.P."/>
            <person name="Mizuno M."/>
            <person name="Moestl D."/>
            <person name="Nakai S."/>
            <person name="Noback M."/>
            <person name="Noone D."/>
            <person name="O'Reilly M."/>
            <person name="Ogawa K."/>
            <person name="Ogiwara A."/>
            <person name="Oudega B."/>
            <person name="Park S.-H."/>
            <person name="Parro V."/>
            <person name="Pohl T.M."/>
            <person name="Portetelle D."/>
            <person name="Porwollik S."/>
            <person name="Prescott A.M."/>
            <person name="Presecan E."/>
            <person name="Pujic P."/>
            <person name="Purnelle B."/>
            <person name="Rapoport G."/>
            <person name="Rey M."/>
            <person name="Reynolds S."/>
            <person name="Rieger M."/>
            <person name="Rivolta C."/>
            <person name="Rocha E."/>
            <person name="Roche B."/>
            <person name="Rose M."/>
            <person name="Sadaie Y."/>
            <person name="Sato T."/>
            <person name="Scanlan E."/>
            <person name="Schleich S."/>
            <person name="Schroeter R."/>
            <person name="Scoffone F."/>
            <person name="Sekiguchi J."/>
            <person name="Sekowska A."/>
            <person name="Seror S.J."/>
            <person name="Serror P."/>
            <person name="Shin B.-S."/>
            <person name="Soldo B."/>
            <person name="Sorokin A."/>
            <person name="Tacconi E."/>
            <person name="Takagi T."/>
            <person name="Takahashi H."/>
            <person name="Takemaru K."/>
            <person name="Takeuchi M."/>
            <person name="Tamakoshi A."/>
            <person name="Tanaka T."/>
            <person name="Terpstra P."/>
            <person name="Tognoni A."/>
            <person name="Tosato V."/>
            <person name="Uchiyama S."/>
            <person name="Vandenbol M."/>
            <person name="Vannier F."/>
            <person name="Vassarotti A."/>
            <person name="Viari A."/>
            <person name="Wambutt R."/>
            <person name="Wedler E."/>
            <person name="Wedler H."/>
            <person name="Weitzenegger T."/>
            <person name="Winters P."/>
            <person name="Wipat A."/>
            <person name="Yamamoto H."/>
            <person name="Yamane K."/>
            <person name="Yasumoto K."/>
            <person name="Yata K."/>
            <person name="Yoshida K."/>
            <person name="Yoshikawa H.-F."/>
            <person name="Zumstein E."/>
            <person name="Yoshikawa H."/>
            <person name="Danchin A."/>
        </authorList>
    </citation>
    <scope>NUCLEOTIDE SEQUENCE [LARGE SCALE GENOMIC DNA]</scope>
    <source>
        <strain>168</strain>
    </source>
</reference>
<protein>
    <recommendedName>
        <fullName>UPF0298 protein YlbG</fullName>
    </recommendedName>
</protein>
<comment type="subcellular location">
    <subcellularLocation>
        <location evidence="1">Cytoplasm</location>
    </subcellularLocation>
</comment>
<comment type="similarity">
    <text evidence="1">Belongs to the UPF0298 family.</text>
</comment>
<accession>O34658</accession>